<feature type="chain" id="PRO_0000105068" description="Integration host factor subunit beta">
    <location>
        <begin position="1"/>
        <end position="93"/>
    </location>
</feature>
<gene>
    <name type="primary">ihfB</name>
    <name type="synonym">himD</name>
    <name type="synonym">hipB</name>
    <name type="ordered locus">RHOS4_36240</name>
    <name type="ORF">RSP_3589</name>
</gene>
<protein>
    <recommendedName>
        <fullName>Integration host factor subunit beta</fullName>
        <shortName>IHF-beta</shortName>
    </recommendedName>
</protein>
<organism>
    <name type="scientific">Cereibacter sphaeroides (strain ATCC 17023 / DSM 158 / JCM 6121 / CCUG 31486 / LMG 2827 / NBRC 12203 / NCIMB 8253 / ATH 2.4.1.)</name>
    <name type="common">Rhodobacter sphaeroides</name>
    <dbReference type="NCBI Taxonomy" id="272943"/>
    <lineage>
        <taxon>Bacteria</taxon>
        <taxon>Pseudomonadati</taxon>
        <taxon>Pseudomonadota</taxon>
        <taxon>Alphaproteobacteria</taxon>
        <taxon>Rhodobacterales</taxon>
        <taxon>Paracoccaceae</taxon>
        <taxon>Cereibacter</taxon>
    </lineage>
</organism>
<name>IHFB_CERS4</name>
<proteinExistence type="inferred from homology"/>
<accession>Q9X4E2</accession>
<accession>Q3IW92</accession>
<reference key="1">
    <citation type="journal article" date="1999" name="Genetics">
        <title>Multiple chromosomes in bacteria. The yin and yang of trp gene localization in Rhodobacter sphaeroides 2.4.1.</title>
        <authorList>
            <person name="Mackenzie C."/>
            <person name="Simmons A.E."/>
            <person name="Kaplan S."/>
        </authorList>
    </citation>
    <scope>NUCLEOTIDE SEQUENCE [GENOMIC DNA]</scope>
</reference>
<reference key="2">
    <citation type="submission" date="2005-09" db="EMBL/GenBank/DDBJ databases">
        <title>Complete sequence of chromosome 2 of Rhodobacter sphaeroides 2.4.1.</title>
        <authorList>
            <person name="Copeland A."/>
            <person name="Lucas S."/>
            <person name="Lapidus A."/>
            <person name="Barry K."/>
            <person name="Detter J.C."/>
            <person name="Glavina T."/>
            <person name="Hammon N."/>
            <person name="Israni S."/>
            <person name="Pitluck S."/>
            <person name="Richardson P."/>
            <person name="Mackenzie C."/>
            <person name="Choudhary M."/>
            <person name="Larimer F."/>
            <person name="Hauser L.J."/>
            <person name="Land M."/>
            <person name="Donohue T.J."/>
            <person name="Kaplan S."/>
        </authorList>
    </citation>
    <scope>NUCLEOTIDE SEQUENCE [LARGE SCALE GENOMIC DNA]</scope>
    <source>
        <strain>ATCC 17023 / DSM 158 / JCM 6121 / CCUG 31486 / LMG 2827 / NBRC 12203 / NCIMB 8253 / ATH 2.4.1.</strain>
    </source>
</reference>
<comment type="function">
    <text evidence="1">This protein is one of the two subunits of integration host factor, a specific DNA-binding protein that functions in genetic recombination as well as in transcriptional and translational control.</text>
</comment>
<comment type="subunit">
    <text>Heterodimer of an alpha and a beta chain.</text>
</comment>
<comment type="similarity">
    <text evidence="2">Belongs to the bacterial histone-like protein family.</text>
</comment>
<keyword id="KW-0233">DNA recombination</keyword>
<keyword id="KW-0238">DNA-binding</keyword>
<keyword id="KW-1185">Reference proteome</keyword>
<keyword id="KW-0804">Transcription</keyword>
<keyword id="KW-0805">Transcription regulation</keyword>
<keyword id="KW-0810">Translation regulation</keyword>
<evidence type="ECO:0000250" key="1"/>
<evidence type="ECO:0000305" key="2"/>
<dbReference type="EMBL" id="AF107093">
    <property type="protein sequence ID" value="AAD29258.1"/>
    <property type="molecule type" value="Genomic_DNA"/>
</dbReference>
<dbReference type="EMBL" id="CP000144">
    <property type="protein sequence ID" value="ABA81192.1"/>
    <property type="molecule type" value="Genomic_DNA"/>
</dbReference>
<dbReference type="RefSeq" id="WP_011339437.1">
    <property type="nucleotide sequence ID" value="NC_007494.2"/>
</dbReference>
<dbReference type="RefSeq" id="YP_355093.1">
    <property type="nucleotide sequence ID" value="NC_007494.2"/>
</dbReference>
<dbReference type="SMR" id="Q9X4E2"/>
<dbReference type="STRING" id="272943.RSP_3589"/>
<dbReference type="EnsemblBacteria" id="ABA81192">
    <property type="protein sequence ID" value="ABA81192"/>
    <property type="gene ID" value="RSP_3589"/>
</dbReference>
<dbReference type="GeneID" id="3722106"/>
<dbReference type="KEGG" id="rsp:RSP_3589"/>
<dbReference type="PATRIC" id="fig|272943.9.peg.4025"/>
<dbReference type="eggNOG" id="COG0776">
    <property type="taxonomic scope" value="Bacteria"/>
</dbReference>
<dbReference type="OrthoDB" id="9804203at2"/>
<dbReference type="PhylomeDB" id="Q9X4E2"/>
<dbReference type="Proteomes" id="UP000002703">
    <property type="component" value="Chromosome 2"/>
</dbReference>
<dbReference type="GO" id="GO:0005694">
    <property type="term" value="C:chromosome"/>
    <property type="evidence" value="ECO:0007669"/>
    <property type="project" value="InterPro"/>
</dbReference>
<dbReference type="GO" id="GO:0005829">
    <property type="term" value="C:cytosol"/>
    <property type="evidence" value="ECO:0007669"/>
    <property type="project" value="TreeGrafter"/>
</dbReference>
<dbReference type="GO" id="GO:0003677">
    <property type="term" value="F:DNA binding"/>
    <property type="evidence" value="ECO:0007669"/>
    <property type="project" value="UniProtKB-UniRule"/>
</dbReference>
<dbReference type="GO" id="GO:0030527">
    <property type="term" value="F:structural constituent of chromatin"/>
    <property type="evidence" value="ECO:0007669"/>
    <property type="project" value="InterPro"/>
</dbReference>
<dbReference type="GO" id="GO:0006310">
    <property type="term" value="P:DNA recombination"/>
    <property type="evidence" value="ECO:0007669"/>
    <property type="project" value="UniProtKB-UniRule"/>
</dbReference>
<dbReference type="GO" id="GO:0006355">
    <property type="term" value="P:regulation of DNA-templated transcription"/>
    <property type="evidence" value="ECO:0007669"/>
    <property type="project" value="UniProtKB-UniRule"/>
</dbReference>
<dbReference type="GO" id="GO:0006417">
    <property type="term" value="P:regulation of translation"/>
    <property type="evidence" value="ECO:0007669"/>
    <property type="project" value="UniProtKB-UniRule"/>
</dbReference>
<dbReference type="CDD" id="cd13836">
    <property type="entry name" value="IHF_B"/>
    <property type="match status" value="1"/>
</dbReference>
<dbReference type="Gene3D" id="4.10.520.10">
    <property type="entry name" value="IHF-like DNA-binding proteins"/>
    <property type="match status" value="1"/>
</dbReference>
<dbReference type="HAMAP" id="MF_00381">
    <property type="entry name" value="IHF_beta"/>
    <property type="match status" value="1"/>
</dbReference>
<dbReference type="InterPro" id="IPR000119">
    <property type="entry name" value="Hist_DNA-bd"/>
</dbReference>
<dbReference type="InterPro" id="IPR020816">
    <property type="entry name" value="Histone-like_DNA-bd_CS"/>
</dbReference>
<dbReference type="InterPro" id="IPR010992">
    <property type="entry name" value="IHF-like_DNA-bd_dom_sf"/>
</dbReference>
<dbReference type="InterPro" id="IPR005685">
    <property type="entry name" value="IHF_beta"/>
</dbReference>
<dbReference type="NCBIfam" id="TIGR00988">
    <property type="entry name" value="hip"/>
    <property type="match status" value="1"/>
</dbReference>
<dbReference type="NCBIfam" id="NF001222">
    <property type="entry name" value="PRK00199.1"/>
    <property type="match status" value="1"/>
</dbReference>
<dbReference type="PANTHER" id="PTHR33175">
    <property type="entry name" value="DNA-BINDING PROTEIN HU"/>
    <property type="match status" value="1"/>
</dbReference>
<dbReference type="PANTHER" id="PTHR33175:SF5">
    <property type="entry name" value="INTEGRATION HOST FACTOR SUBUNIT BETA"/>
    <property type="match status" value="1"/>
</dbReference>
<dbReference type="Pfam" id="PF00216">
    <property type="entry name" value="Bac_DNA_binding"/>
    <property type="match status" value="1"/>
</dbReference>
<dbReference type="PRINTS" id="PR01727">
    <property type="entry name" value="DNABINDINGHU"/>
</dbReference>
<dbReference type="SMART" id="SM00411">
    <property type="entry name" value="BHL"/>
    <property type="match status" value="1"/>
</dbReference>
<dbReference type="SUPFAM" id="SSF47729">
    <property type="entry name" value="IHF-like DNA-binding proteins"/>
    <property type="match status" value="1"/>
</dbReference>
<dbReference type="PROSITE" id="PS00045">
    <property type="entry name" value="HISTONE_LIKE"/>
    <property type="match status" value="1"/>
</dbReference>
<sequence length="93" mass="10654">MIRSELIQKIADENPHLTQRHVERIVNTVFEEIIEALARGDRVELRGFGAFSVKARDARVGRNPRTGEAVEVEDKKVPFFKTGKLLRDRLNAK</sequence>